<protein>
    <recommendedName>
        <fullName evidence="1">3-dehydroquinate dehydratase</fullName>
        <shortName evidence="1">3-dehydroquinase</shortName>
        <ecNumber evidence="1">4.2.1.10</ecNumber>
    </recommendedName>
    <alternativeName>
        <fullName evidence="1">Type II DHQase</fullName>
    </alternativeName>
</protein>
<proteinExistence type="inferred from homology"/>
<evidence type="ECO:0000255" key="1">
    <source>
        <dbReference type="HAMAP-Rule" id="MF_00169"/>
    </source>
</evidence>
<keyword id="KW-0028">Amino-acid biosynthesis</keyword>
<keyword id="KW-0057">Aromatic amino acid biosynthesis</keyword>
<keyword id="KW-0456">Lyase</keyword>
<keyword id="KW-1185">Reference proteome</keyword>
<reference key="1">
    <citation type="journal article" date="2005" name="Nat. Genet.">
        <title>The complete genome sequence of Francisella tularensis, the causative agent of tularemia.</title>
        <authorList>
            <person name="Larsson P."/>
            <person name="Oyston P.C.F."/>
            <person name="Chain P."/>
            <person name="Chu M.C."/>
            <person name="Duffield M."/>
            <person name="Fuxelius H.-H."/>
            <person name="Garcia E."/>
            <person name="Haelltorp G."/>
            <person name="Johansson D."/>
            <person name="Isherwood K.E."/>
            <person name="Karp P.D."/>
            <person name="Larsson E."/>
            <person name="Liu Y."/>
            <person name="Michell S."/>
            <person name="Prior J."/>
            <person name="Prior R."/>
            <person name="Malfatti S."/>
            <person name="Sjoestedt A."/>
            <person name="Svensson K."/>
            <person name="Thompson N."/>
            <person name="Vergez L."/>
            <person name="Wagg J.K."/>
            <person name="Wren B.W."/>
            <person name="Lindler L.E."/>
            <person name="Andersson S.G.E."/>
            <person name="Forsman M."/>
            <person name="Titball R.W."/>
        </authorList>
    </citation>
    <scope>NUCLEOTIDE SEQUENCE [LARGE SCALE GENOMIC DNA]</scope>
    <source>
        <strain>SCHU S4 / Schu 4</strain>
    </source>
</reference>
<comment type="function">
    <text evidence="1">Catalyzes a trans-dehydration via an enolate intermediate.</text>
</comment>
<comment type="catalytic activity">
    <reaction evidence="1">
        <text>3-dehydroquinate = 3-dehydroshikimate + H2O</text>
        <dbReference type="Rhea" id="RHEA:21096"/>
        <dbReference type="ChEBI" id="CHEBI:15377"/>
        <dbReference type="ChEBI" id="CHEBI:16630"/>
        <dbReference type="ChEBI" id="CHEBI:32364"/>
        <dbReference type="EC" id="4.2.1.10"/>
    </reaction>
</comment>
<comment type="pathway">
    <text evidence="1">Metabolic intermediate biosynthesis; chorismate biosynthesis; chorismate from D-erythrose 4-phosphate and phosphoenolpyruvate: step 3/7.</text>
</comment>
<comment type="subunit">
    <text evidence="1">Homododecamer.</text>
</comment>
<comment type="similarity">
    <text evidence="1">Belongs to the type-II 3-dehydroquinase family.</text>
</comment>
<name>AROQ_FRATT</name>
<organism>
    <name type="scientific">Francisella tularensis subsp. tularensis (strain SCHU S4 / Schu 4)</name>
    <dbReference type="NCBI Taxonomy" id="177416"/>
    <lineage>
        <taxon>Bacteria</taxon>
        <taxon>Pseudomonadati</taxon>
        <taxon>Pseudomonadota</taxon>
        <taxon>Gammaproteobacteria</taxon>
        <taxon>Thiotrichales</taxon>
        <taxon>Francisellaceae</taxon>
        <taxon>Francisella</taxon>
    </lineage>
</organism>
<dbReference type="EC" id="4.2.1.10" evidence="1"/>
<dbReference type="EMBL" id="AJ749949">
    <property type="protein sequence ID" value="CAG45104.1"/>
    <property type="molecule type" value="Genomic_DNA"/>
</dbReference>
<dbReference type="RefSeq" id="WP_003016972.1">
    <property type="nucleotide sequence ID" value="NZ_CP010290.1"/>
</dbReference>
<dbReference type="RefSeq" id="YP_169509.1">
    <property type="nucleotide sequence ID" value="NC_006570.2"/>
</dbReference>
<dbReference type="SMR" id="Q5NHI3"/>
<dbReference type="STRING" id="177416.FTT_0471"/>
<dbReference type="DNASU" id="3192548"/>
<dbReference type="EnsemblBacteria" id="CAG45104">
    <property type="protein sequence ID" value="CAG45104"/>
    <property type="gene ID" value="FTT_0471"/>
</dbReference>
<dbReference type="GeneID" id="75263952"/>
<dbReference type="KEGG" id="ftu:FTT_0471"/>
<dbReference type="eggNOG" id="COG0757">
    <property type="taxonomic scope" value="Bacteria"/>
</dbReference>
<dbReference type="OrthoDB" id="9790793at2"/>
<dbReference type="UniPathway" id="UPA00053">
    <property type="reaction ID" value="UER00086"/>
</dbReference>
<dbReference type="Proteomes" id="UP000001174">
    <property type="component" value="Chromosome"/>
</dbReference>
<dbReference type="GO" id="GO:0003855">
    <property type="term" value="F:3-dehydroquinate dehydratase activity"/>
    <property type="evidence" value="ECO:0007669"/>
    <property type="project" value="UniProtKB-UniRule"/>
</dbReference>
<dbReference type="GO" id="GO:0008652">
    <property type="term" value="P:amino acid biosynthetic process"/>
    <property type="evidence" value="ECO:0007669"/>
    <property type="project" value="UniProtKB-KW"/>
</dbReference>
<dbReference type="GO" id="GO:0009073">
    <property type="term" value="P:aromatic amino acid family biosynthetic process"/>
    <property type="evidence" value="ECO:0007669"/>
    <property type="project" value="UniProtKB-KW"/>
</dbReference>
<dbReference type="GO" id="GO:0009423">
    <property type="term" value="P:chorismate biosynthetic process"/>
    <property type="evidence" value="ECO:0007669"/>
    <property type="project" value="UniProtKB-UniRule"/>
</dbReference>
<dbReference type="GO" id="GO:0019631">
    <property type="term" value="P:quinate catabolic process"/>
    <property type="evidence" value="ECO:0007669"/>
    <property type="project" value="TreeGrafter"/>
</dbReference>
<dbReference type="CDD" id="cd00466">
    <property type="entry name" value="DHQase_II"/>
    <property type="match status" value="1"/>
</dbReference>
<dbReference type="Gene3D" id="3.40.50.9100">
    <property type="entry name" value="Dehydroquinase, class II"/>
    <property type="match status" value="1"/>
</dbReference>
<dbReference type="HAMAP" id="MF_00169">
    <property type="entry name" value="AroQ"/>
    <property type="match status" value="1"/>
</dbReference>
<dbReference type="InterPro" id="IPR001874">
    <property type="entry name" value="DHquinase_II"/>
</dbReference>
<dbReference type="InterPro" id="IPR018509">
    <property type="entry name" value="DHquinase_II_CS"/>
</dbReference>
<dbReference type="InterPro" id="IPR036441">
    <property type="entry name" value="DHquinase_II_sf"/>
</dbReference>
<dbReference type="NCBIfam" id="TIGR01088">
    <property type="entry name" value="aroQ"/>
    <property type="match status" value="1"/>
</dbReference>
<dbReference type="NCBIfam" id="NF003804">
    <property type="entry name" value="PRK05395.1-1"/>
    <property type="match status" value="1"/>
</dbReference>
<dbReference type="NCBIfam" id="NF003805">
    <property type="entry name" value="PRK05395.1-2"/>
    <property type="match status" value="1"/>
</dbReference>
<dbReference type="NCBIfam" id="NF003806">
    <property type="entry name" value="PRK05395.1-3"/>
    <property type="match status" value="1"/>
</dbReference>
<dbReference type="NCBIfam" id="NF003807">
    <property type="entry name" value="PRK05395.1-4"/>
    <property type="match status" value="1"/>
</dbReference>
<dbReference type="PANTHER" id="PTHR21272">
    <property type="entry name" value="CATABOLIC 3-DEHYDROQUINASE"/>
    <property type="match status" value="1"/>
</dbReference>
<dbReference type="PANTHER" id="PTHR21272:SF3">
    <property type="entry name" value="CATABOLIC 3-DEHYDROQUINASE"/>
    <property type="match status" value="1"/>
</dbReference>
<dbReference type="Pfam" id="PF01220">
    <property type="entry name" value="DHquinase_II"/>
    <property type="match status" value="1"/>
</dbReference>
<dbReference type="PIRSF" id="PIRSF001399">
    <property type="entry name" value="DHquinase_II"/>
    <property type="match status" value="1"/>
</dbReference>
<dbReference type="SUPFAM" id="SSF52304">
    <property type="entry name" value="Type II 3-dehydroquinate dehydratase"/>
    <property type="match status" value="1"/>
</dbReference>
<dbReference type="PROSITE" id="PS01029">
    <property type="entry name" value="DEHYDROQUINASE_II"/>
    <property type="match status" value="1"/>
</dbReference>
<accession>Q5NHI3</accession>
<feature type="chain" id="PRO_1000077040" description="3-dehydroquinate dehydratase">
    <location>
        <begin position="1"/>
        <end position="145"/>
    </location>
</feature>
<feature type="active site" description="Proton acceptor" evidence="1">
    <location>
        <position position="22"/>
    </location>
</feature>
<feature type="active site" description="Proton donor" evidence="1">
    <location>
        <position position="97"/>
    </location>
</feature>
<feature type="binding site" evidence="1">
    <location>
        <position position="71"/>
    </location>
    <ligand>
        <name>substrate</name>
    </ligand>
</feature>
<feature type="binding site" evidence="1">
    <location>
        <position position="77"/>
    </location>
    <ligand>
        <name>substrate</name>
    </ligand>
</feature>
<feature type="binding site" evidence="1">
    <location>
        <position position="84"/>
    </location>
    <ligand>
        <name>substrate</name>
    </ligand>
</feature>
<feature type="binding site" evidence="1">
    <location>
        <begin position="98"/>
        <end position="99"/>
    </location>
    <ligand>
        <name>substrate</name>
    </ligand>
</feature>
<feature type="binding site" evidence="1">
    <location>
        <position position="108"/>
    </location>
    <ligand>
        <name>substrate</name>
    </ligand>
</feature>
<feature type="site" description="Transition state stabilizer" evidence="1">
    <location>
        <position position="17"/>
    </location>
</feature>
<sequence length="145" mass="16330">MDVLVINGPNLNLLGTRQPQFYGHKTLADINNDLLKIAKENNINIDFYQSNHEGQIIDKIQQTAAKIIIINPAAFTHTSVAIRDAFLAINKPFIEIHLSNIYNREEFRTKSFLSDIAYGCIFGFGPNGYTLALIEAINYINMKGE</sequence>
<gene>
    <name evidence="1" type="primary">aroQ</name>
    <name type="ordered locus">FTT_0471</name>
</gene>